<organism>
    <name type="scientific">Geobacillus sp. (strain WCH70)</name>
    <dbReference type="NCBI Taxonomy" id="471223"/>
    <lineage>
        <taxon>Bacteria</taxon>
        <taxon>Bacillati</taxon>
        <taxon>Bacillota</taxon>
        <taxon>Bacilli</taxon>
        <taxon>Bacillales</taxon>
        <taxon>Anoxybacillaceae</taxon>
        <taxon>Geobacillus</taxon>
    </lineage>
</organism>
<keyword id="KW-0028">Amino-acid biosynthesis</keyword>
<keyword id="KW-0456">Lyase</keyword>
<keyword id="KW-0479">Metal-binding</keyword>
<keyword id="KW-0486">Methionine biosynthesis</keyword>
<keyword id="KW-0862">Zinc</keyword>
<sequence>MSLLVKRWKELAEIKAELAARDWFFATSGNLSIKVTDDPLTFLVTASGKDKRKQTDEDFLLVDASGNPVENTHLKPSAETLLHVEIYKKTNAGCSLHVHTIDNNVISELYGDEGEVAFSGQEIIKAFGIWEEDAVIRIPIIPNYAHIPTLAKEFAKHVNGDAGAVLIRNHGITVWGRDAFEAKKFLEAWEFLFSWHVKWLLLKQTAVLPVVKP</sequence>
<reference key="1">
    <citation type="submission" date="2009-06" db="EMBL/GenBank/DDBJ databases">
        <title>Complete sequence of chromosome of Geopacillus sp. WCH70.</title>
        <authorList>
            <consortium name="US DOE Joint Genome Institute"/>
            <person name="Lucas S."/>
            <person name="Copeland A."/>
            <person name="Lapidus A."/>
            <person name="Glavina del Rio T."/>
            <person name="Dalin E."/>
            <person name="Tice H."/>
            <person name="Bruce D."/>
            <person name="Goodwin L."/>
            <person name="Pitluck S."/>
            <person name="Chertkov O."/>
            <person name="Brettin T."/>
            <person name="Detter J.C."/>
            <person name="Han C."/>
            <person name="Larimer F."/>
            <person name="Land M."/>
            <person name="Hauser L."/>
            <person name="Kyrpides N."/>
            <person name="Mikhailova N."/>
            <person name="Brumm P."/>
            <person name="Mead D.A."/>
            <person name="Richardson P."/>
        </authorList>
    </citation>
    <scope>NUCLEOTIDE SEQUENCE [LARGE SCALE GENOMIC DNA]</scope>
    <source>
        <strain>WCH70</strain>
    </source>
</reference>
<proteinExistence type="inferred from homology"/>
<protein>
    <recommendedName>
        <fullName evidence="1">Methylthioribulose-1-phosphate dehydratase</fullName>
        <shortName evidence="1">MTRu-1-P dehydratase</shortName>
        <ecNumber evidence="1">4.2.1.109</ecNumber>
    </recommendedName>
</protein>
<comment type="function">
    <text evidence="1">Catalyzes the dehydration of methylthioribulose-1-phosphate (MTRu-1-P) into 2,3-diketo-5-methylthiopentyl-1-phosphate (DK-MTP-1-P).</text>
</comment>
<comment type="catalytic activity">
    <reaction evidence="1">
        <text>5-(methylsulfanyl)-D-ribulose 1-phosphate = 5-methylsulfanyl-2,3-dioxopentyl phosphate + H2O</text>
        <dbReference type="Rhea" id="RHEA:15549"/>
        <dbReference type="ChEBI" id="CHEBI:15377"/>
        <dbReference type="ChEBI" id="CHEBI:58548"/>
        <dbReference type="ChEBI" id="CHEBI:58828"/>
        <dbReference type="EC" id="4.2.1.109"/>
    </reaction>
</comment>
<comment type="cofactor">
    <cofactor evidence="1">
        <name>Zn(2+)</name>
        <dbReference type="ChEBI" id="CHEBI:29105"/>
    </cofactor>
    <text evidence="1">Binds 1 zinc ion per subunit.</text>
</comment>
<comment type="pathway">
    <text evidence="1">Amino-acid biosynthesis; L-methionine biosynthesis via salvage pathway; L-methionine from S-methyl-5-thio-alpha-D-ribose 1-phosphate: step 2/6.</text>
</comment>
<comment type="subunit">
    <text evidence="1">Homotetramer.</text>
</comment>
<comment type="similarity">
    <text evidence="1">Belongs to the aldolase class II family. MtnB subfamily.</text>
</comment>
<dbReference type="EC" id="4.2.1.109" evidence="1"/>
<dbReference type="EMBL" id="CP001638">
    <property type="protein sequence ID" value="ACS23732.1"/>
    <property type="molecule type" value="Genomic_DNA"/>
</dbReference>
<dbReference type="SMR" id="C5D7V1"/>
<dbReference type="STRING" id="471223.GWCH70_0852"/>
<dbReference type="KEGG" id="gwc:GWCH70_0852"/>
<dbReference type="eggNOG" id="COG0235">
    <property type="taxonomic scope" value="Bacteria"/>
</dbReference>
<dbReference type="HOGENOM" id="CLU_006033_4_1_9"/>
<dbReference type="OrthoDB" id="9805559at2"/>
<dbReference type="UniPathway" id="UPA00904">
    <property type="reaction ID" value="UER00875"/>
</dbReference>
<dbReference type="GO" id="GO:0005737">
    <property type="term" value="C:cytoplasm"/>
    <property type="evidence" value="ECO:0007669"/>
    <property type="project" value="InterPro"/>
</dbReference>
<dbReference type="GO" id="GO:0046570">
    <property type="term" value="F:methylthioribulose 1-phosphate dehydratase activity"/>
    <property type="evidence" value="ECO:0007669"/>
    <property type="project" value="UniProtKB-UniRule"/>
</dbReference>
<dbReference type="GO" id="GO:0008270">
    <property type="term" value="F:zinc ion binding"/>
    <property type="evidence" value="ECO:0007669"/>
    <property type="project" value="UniProtKB-UniRule"/>
</dbReference>
<dbReference type="GO" id="GO:0019509">
    <property type="term" value="P:L-methionine salvage from methylthioadenosine"/>
    <property type="evidence" value="ECO:0007669"/>
    <property type="project" value="UniProtKB-UniRule"/>
</dbReference>
<dbReference type="Gene3D" id="3.40.225.10">
    <property type="entry name" value="Class II aldolase/adducin N-terminal domain"/>
    <property type="match status" value="1"/>
</dbReference>
<dbReference type="HAMAP" id="MF_01677">
    <property type="entry name" value="Salvage_MtnB"/>
    <property type="match status" value="1"/>
</dbReference>
<dbReference type="InterPro" id="IPR001303">
    <property type="entry name" value="Aldolase_II/adducin_N"/>
</dbReference>
<dbReference type="InterPro" id="IPR036409">
    <property type="entry name" value="Aldolase_II/adducin_N_sf"/>
</dbReference>
<dbReference type="InterPro" id="IPR017714">
    <property type="entry name" value="MethylthioRu-1-P_deHdtase_MtnB"/>
</dbReference>
<dbReference type="NCBIfam" id="NF005244">
    <property type="entry name" value="PRK06754.1"/>
    <property type="match status" value="1"/>
</dbReference>
<dbReference type="NCBIfam" id="TIGR03328">
    <property type="entry name" value="salvage_mtnB"/>
    <property type="match status" value="1"/>
</dbReference>
<dbReference type="PANTHER" id="PTHR10640">
    <property type="entry name" value="METHYLTHIORIBULOSE-1-PHOSPHATE DEHYDRATASE"/>
    <property type="match status" value="1"/>
</dbReference>
<dbReference type="PANTHER" id="PTHR10640:SF7">
    <property type="entry name" value="METHYLTHIORIBULOSE-1-PHOSPHATE DEHYDRATASE"/>
    <property type="match status" value="1"/>
</dbReference>
<dbReference type="Pfam" id="PF00596">
    <property type="entry name" value="Aldolase_II"/>
    <property type="match status" value="1"/>
</dbReference>
<dbReference type="SMART" id="SM01007">
    <property type="entry name" value="Aldolase_II"/>
    <property type="match status" value="1"/>
</dbReference>
<dbReference type="SUPFAM" id="SSF53639">
    <property type="entry name" value="AraD/HMP-PK domain-like"/>
    <property type="match status" value="1"/>
</dbReference>
<name>MTNB_GEOSW</name>
<evidence type="ECO:0000255" key="1">
    <source>
        <dbReference type="HAMAP-Rule" id="MF_01677"/>
    </source>
</evidence>
<gene>
    <name evidence="1" type="primary">mtnB</name>
    <name type="ordered locus">GWCH70_0852</name>
</gene>
<accession>C5D7V1</accession>
<feature type="chain" id="PRO_1000215892" description="Methylthioribulose-1-phosphate dehydratase">
    <location>
        <begin position="1"/>
        <end position="213"/>
    </location>
</feature>
<feature type="binding site" evidence="1">
    <location>
        <position position="97"/>
    </location>
    <ligand>
        <name>Zn(2+)</name>
        <dbReference type="ChEBI" id="CHEBI:29105"/>
    </ligand>
</feature>
<feature type="binding site" evidence="1">
    <location>
        <position position="99"/>
    </location>
    <ligand>
        <name>Zn(2+)</name>
        <dbReference type="ChEBI" id="CHEBI:29105"/>
    </ligand>
</feature>